<proteinExistence type="inferred from homology"/>
<sequence>MKFFLDTANVEAIRAINELGVVDGVTTNPSIISREGRDFETVIKEICEIVDGPISAEVTGLTAEEMIAEARNIAKWHDNVVVKIPMTTEGLKATNVLSQEGIKTNVTLIFTVSQGLMAMKAGATYISPFIGRLEDIGADPYQLISDLRGIIDLYGFQAEIIAASIRTAAHVEAVAQLGAHIATIPDPLFAKMTEHPLTTNGLKTFMEDWASFKK</sequence>
<gene>
    <name evidence="1" type="primary">tal</name>
    <name type="ordered locus">SEQ_1819</name>
</gene>
<protein>
    <recommendedName>
        <fullName evidence="1">Probable transaldolase</fullName>
        <ecNumber evidence="1">2.2.1.2</ecNumber>
    </recommendedName>
</protein>
<keyword id="KW-0963">Cytoplasm</keyword>
<keyword id="KW-0570">Pentose shunt</keyword>
<keyword id="KW-0704">Schiff base</keyword>
<keyword id="KW-0808">Transferase</keyword>
<evidence type="ECO:0000255" key="1">
    <source>
        <dbReference type="HAMAP-Rule" id="MF_00494"/>
    </source>
</evidence>
<comment type="function">
    <text evidence="1">Transaldolase is important for the balance of metabolites in the pentose-phosphate pathway.</text>
</comment>
<comment type="catalytic activity">
    <reaction evidence="1">
        <text>D-sedoheptulose 7-phosphate + D-glyceraldehyde 3-phosphate = D-erythrose 4-phosphate + beta-D-fructose 6-phosphate</text>
        <dbReference type="Rhea" id="RHEA:17053"/>
        <dbReference type="ChEBI" id="CHEBI:16897"/>
        <dbReference type="ChEBI" id="CHEBI:57483"/>
        <dbReference type="ChEBI" id="CHEBI:57634"/>
        <dbReference type="ChEBI" id="CHEBI:59776"/>
        <dbReference type="EC" id="2.2.1.2"/>
    </reaction>
</comment>
<comment type="pathway">
    <text evidence="1">Carbohydrate degradation; pentose phosphate pathway; D-glyceraldehyde 3-phosphate and beta-D-fructose 6-phosphate from D-ribose 5-phosphate and D-xylulose 5-phosphate (non-oxidative stage): step 2/3.</text>
</comment>
<comment type="subcellular location">
    <subcellularLocation>
        <location evidence="1">Cytoplasm</location>
    </subcellularLocation>
</comment>
<comment type="similarity">
    <text evidence="1">Belongs to the transaldolase family. Type 3B subfamily.</text>
</comment>
<reference key="1">
    <citation type="journal article" date="2009" name="PLoS Pathog.">
        <title>Genomic evidence for the evolution of Streptococcus equi: host restriction, increased virulence, and genetic exchange with human pathogens.</title>
        <authorList>
            <person name="Holden M.T.G."/>
            <person name="Heather Z."/>
            <person name="Paillot R."/>
            <person name="Steward K.F."/>
            <person name="Webb K."/>
            <person name="Ainslie F."/>
            <person name="Jourdan T."/>
            <person name="Bason N.C."/>
            <person name="Holroyd N.E."/>
            <person name="Mungall K."/>
            <person name="Quail M.A."/>
            <person name="Sanders M."/>
            <person name="Simmonds M."/>
            <person name="Willey D."/>
            <person name="Brooks K."/>
            <person name="Aanensen D.M."/>
            <person name="Spratt B.G."/>
            <person name="Jolley K.A."/>
            <person name="Maiden M.C.J."/>
            <person name="Kehoe M."/>
            <person name="Chanter N."/>
            <person name="Bentley S.D."/>
            <person name="Robinson C."/>
            <person name="Maskell D.J."/>
            <person name="Parkhill J."/>
            <person name="Waller A.S."/>
        </authorList>
    </citation>
    <scope>NUCLEOTIDE SEQUENCE [LARGE SCALE GENOMIC DNA]</scope>
    <source>
        <strain>4047</strain>
    </source>
</reference>
<accession>C0M7L5</accession>
<dbReference type="EC" id="2.2.1.2" evidence="1"/>
<dbReference type="EMBL" id="FM204883">
    <property type="protein sequence ID" value="CAW94960.1"/>
    <property type="molecule type" value="Genomic_DNA"/>
</dbReference>
<dbReference type="SMR" id="C0M7L5"/>
<dbReference type="KEGG" id="seu:SEQ_1819"/>
<dbReference type="HOGENOM" id="CLU_079764_0_0_9"/>
<dbReference type="OrthoDB" id="9807051at2"/>
<dbReference type="UniPathway" id="UPA00115">
    <property type="reaction ID" value="UER00414"/>
</dbReference>
<dbReference type="Proteomes" id="UP000001365">
    <property type="component" value="Chromosome"/>
</dbReference>
<dbReference type="GO" id="GO:0005737">
    <property type="term" value="C:cytoplasm"/>
    <property type="evidence" value="ECO:0007669"/>
    <property type="project" value="UniProtKB-SubCell"/>
</dbReference>
<dbReference type="GO" id="GO:0016832">
    <property type="term" value="F:aldehyde-lyase activity"/>
    <property type="evidence" value="ECO:0007669"/>
    <property type="project" value="InterPro"/>
</dbReference>
<dbReference type="GO" id="GO:0004801">
    <property type="term" value="F:transaldolase activity"/>
    <property type="evidence" value="ECO:0007669"/>
    <property type="project" value="UniProtKB-UniRule"/>
</dbReference>
<dbReference type="GO" id="GO:0005975">
    <property type="term" value="P:carbohydrate metabolic process"/>
    <property type="evidence" value="ECO:0007669"/>
    <property type="project" value="InterPro"/>
</dbReference>
<dbReference type="GO" id="GO:0006098">
    <property type="term" value="P:pentose-phosphate shunt"/>
    <property type="evidence" value="ECO:0007669"/>
    <property type="project" value="UniProtKB-UniRule"/>
</dbReference>
<dbReference type="CDD" id="cd00956">
    <property type="entry name" value="Transaldolase_FSA"/>
    <property type="match status" value="1"/>
</dbReference>
<dbReference type="FunFam" id="3.20.20.70:FF:000018">
    <property type="entry name" value="Probable transaldolase"/>
    <property type="match status" value="1"/>
</dbReference>
<dbReference type="Gene3D" id="3.20.20.70">
    <property type="entry name" value="Aldolase class I"/>
    <property type="match status" value="1"/>
</dbReference>
<dbReference type="HAMAP" id="MF_00494">
    <property type="entry name" value="Transaldolase_3b"/>
    <property type="match status" value="1"/>
</dbReference>
<dbReference type="InterPro" id="IPR013785">
    <property type="entry name" value="Aldolase_TIM"/>
</dbReference>
<dbReference type="InterPro" id="IPR001585">
    <property type="entry name" value="TAL/FSA"/>
</dbReference>
<dbReference type="InterPro" id="IPR022999">
    <property type="entry name" value="Transaldolase_3B"/>
</dbReference>
<dbReference type="InterPro" id="IPR004731">
    <property type="entry name" value="Transaldolase_3B/F6P_aldolase"/>
</dbReference>
<dbReference type="InterPro" id="IPR018225">
    <property type="entry name" value="Transaldolase_AS"/>
</dbReference>
<dbReference type="InterPro" id="IPR033919">
    <property type="entry name" value="TSA/FSA_arc/bac"/>
</dbReference>
<dbReference type="NCBIfam" id="TIGR00875">
    <property type="entry name" value="fsa_talC_mipB"/>
    <property type="match status" value="1"/>
</dbReference>
<dbReference type="PANTHER" id="PTHR10683">
    <property type="entry name" value="TRANSALDOLASE"/>
    <property type="match status" value="1"/>
</dbReference>
<dbReference type="PANTHER" id="PTHR10683:SF36">
    <property type="entry name" value="TRANSALDOLASE"/>
    <property type="match status" value="1"/>
</dbReference>
<dbReference type="Pfam" id="PF00923">
    <property type="entry name" value="TAL_FSA"/>
    <property type="match status" value="1"/>
</dbReference>
<dbReference type="SUPFAM" id="SSF51569">
    <property type="entry name" value="Aldolase"/>
    <property type="match status" value="1"/>
</dbReference>
<dbReference type="PROSITE" id="PS01054">
    <property type="entry name" value="TRANSALDOLASE_1"/>
    <property type="match status" value="1"/>
</dbReference>
<dbReference type="PROSITE" id="PS00958">
    <property type="entry name" value="TRANSALDOLASE_2"/>
    <property type="match status" value="1"/>
</dbReference>
<feature type="chain" id="PRO_1000198477" description="Probable transaldolase">
    <location>
        <begin position="1"/>
        <end position="214"/>
    </location>
</feature>
<feature type="active site" description="Schiff-base intermediate with substrate" evidence="1">
    <location>
        <position position="83"/>
    </location>
</feature>
<name>TAL_STRE4</name>
<organism>
    <name type="scientific">Streptococcus equi subsp. equi (strain 4047)</name>
    <dbReference type="NCBI Taxonomy" id="553482"/>
    <lineage>
        <taxon>Bacteria</taxon>
        <taxon>Bacillati</taxon>
        <taxon>Bacillota</taxon>
        <taxon>Bacilli</taxon>
        <taxon>Lactobacillales</taxon>
        <taxon>Streptococcaceae</taxon>
        <taxon>Streptococcus</taxon>
    </lineage>
</organism>